<evidence type="ECO:0000250" key="1">
    <source>
        <dbReference type="UniProtKB" id="P23945"/>
    </source>
</evidence>
<evidence type="ECO:0000255" key="2"/>
<evidence type="ECO:0000255" key="3">
    <source>
        <dbReference type="PROSITE-ProRule" id="PRU00521"/>
    </source>
</evidence>
<evidence type="ECO:0000269" key="4">
    <source>
    </source>
</evidence>
<evidence type="ECO:0000269" key="5">
    <source>
    </source>
</evidence>
<evidence type="ECO:0000305" key="6"/>
<dbReference type="EMBL" id="L02842">
    <property type="protein sequence ID" value="AAA41175.1"/>
    <property type="molecule type" value="mRNA"/>
</dbReference>
<dbReference type="EMBL" id="S81198">
    <property type="protein sequence ID" value="AAB21415.2"/>
    <property type="molecule type" value="Genomic_DNA"/>
</dbReference>
<dbReference type="EMBL" id="S81117">
    <property type="protein sequence ID" value="AAB21415.2"/>
    <property type="status" value="JOINED"/>
    <property type="molecule type" value="Genomic_DNA"/>
</dbReference>
<dbReference type="EMBL" id="S81119">
    <property type="protein sequence ID" value="AAB21415.2"/>
    <property type="status" value="JOINED"/>
    <property type="molecule type" value="Genomic_DNA"/>
</dbReference>
<dbReference type="EMBL" id="S81171">
    <property type="protein sequence ID" value="AAB21415.2"/>
    <property type="status" value="JOINED"/>
    <property type="molecule type" value="Genomic_DNA"/>
</dbReference>
<dbReference type="EMBL" id="S81121">
    <property type="protein sequence ID" value="AAB21415.2"/>
    <property type="status" value="JOINED"/>
    <property type="molecule type" value="Genomic_DNA"/>
</dbReference>
<dbReference type="EMBL" id="S81174">
    <property type="protein sequence ID" value="AAB21415.2"/>
    <property type="status" value="JOINED"/>
    <property type="molecule type" value="Genomic_DNA"/>
</dbReference>
<dbReference type="EMBL" id="S81183">
    <property type="protein sequence ID" value="AAB21415.2"/>
    <property type="status" value="JOINED"/>
    <property type="molecule type" value="Genomic_DNA"/>
</dbReference>
<dbReference type="EMBL" id="S81194">
    <property type="protein sequence ID" value="AAB21415.2"/>
    <property type="status" value="JOINED"/>
    <property type="molecule type" value="Genomic_DNA"/>
</dbReference>
<dbReference type="EMBL" id="S81185">
    <property type="protein sequence ID" value="AAB21415.2"/>
    <property type="status" value="JOINED"/>
    <property type="molecule type" value="Genomic_DNA"/>
</dbReference>
<dbReference type="EMBL" id="S81178">
    <property type="protein sequence ID" value="AAB21415.2"/>
    <property type="status" value="JOINED"/>
    <property type="molecule type" value="Genomic_DNA"/>
</dbReference>
<dbReference type="PIR" id="A34548">
    <property type="entry name" value="A34548"/>
</dbReference>
<dbReference type="RefSeq" id="NP_954707.1">
    <property type="nucleotide sequence ID" value="NM_199237.2"/>
</dbReference>
<dbReference type="SMR" id="P20395"/>
<dbReference type="FunCoup" id="P20395">
    <property type="interactions" value="52"/>
</dbReference>
<dbReference type="STRING" id="10116.ENSRNOP00000022802"/>
<dbReference type="BindingDB" id="P20395"/>
<dbReference type="ChEMBL" id="CHEMBL4288"/>
<dbReference type="GlyCosmos" id="P20395">
    <property type="glycosylation" value="3 sites, No reported glycans"/>
</dbReference>
<dbReference type="GlyGen" id="P20395">
    <property type="glycosylation" value="3 sites"/>
</dbReference>
<dbReference type="iPTMnet" id="P20395"/>
<dbReference type="PhosphoSitePlus" id="P20395"/>
<dbReference type="PaxDb" id="10116-ENSRNOP00000022802"/>
<dbReference type="Ensembl" id="ENSRNOT00000022802.5">
    <property type="protein sequence ID" value="ENSRNOP00000022802.3"/>
    <property type="gene ID" value="ENSRNOG00000016783.7"/>
</dbReference>
<dbReference type="GeneID" id="25449"/>
<dbReference type="KEGG" id="rno:25449"/>
<dbReference type="UCSC" id="RGD:2632">
    <property type="organism name" value="rat"/>
</dbReference>
<dbReference type="AGR" id="RGD:2632"/>
<dbReference type="CTD" id="2492"/>
<dbReference type="RGD" id="2632">
    <property type="gene designation" value="Fshr"/>
</dbReference>
<dbReference type="eggNOG" id="KOG2087">
    <property type="taxonomic scope" value="Eukaryota"/>
</dbReference>
<dbReference type="GeneTree" id="ENSGT00940000158952"/>
<dbReference type="HOGENOM" id="CLU_006130_1_1_1"/>
<dbReference type="InParanoid" id="P20395"/>
<dbReference type="OMA" id="FINFSCG"/>
<dbReference type="OrthoDB" id="5981530at2759"/>
<dbReference type="PhylomeDB" id="P20395"/>
<dbReference type="TreeFam" id="TF316814"/>
<dbReference type="Reactome" id="R-RNO-375281">
    <property type="pathway name" value="Hormone ligand-binding receptors"/>
</dbReference>
<dbReference type="PRO" id="PR:P20395"/>
<dbReference type="Proteomes" id="UP000002494">
    <property type="component" value="Chromosome 6"/>
</dbReference>
<dbReference type="Bgee" id="ENSRNOG00000016783">
    <property type="expression patterns" value="Expressed in ovary and 1 other cell type or tissue"/>
</dbReference>
<dbReference type="GO" id="GO:0009986">
    <property type="term" value="C:cell surface"/>
    <property type="evidence" value="ECO:0000314"/>
    <property type="project" value="RGD"/>
</dbReference>
<dbReference type="GO" id="GO:0005768">
    <property type="term" value="C:endosome"/>
    <property type="evidence" value="ECO:0000314"/>
    <property type="project" value="RGD"/>
</dbReference>
<dbReference type="GO" id="GO:0016020">
    <property type="term" value="C:membrane"/>
    <property type="evidence" value="ECO:0000250"/>
    <property type="project" value="UniProtKB"/>
</dbReference>
<dbReference type="GO" id="GO:0005886">
    <property type="term" value="C:plasma membrane"/>
    <property type="evidence" value="ECO:0000250"/>
    <property type="project" value="UniProtKB"/>
</dbReference>
<dbReference type="GO" id="GO:0043235">
    <property type="term" value="C:receptor complex"/>
    <property type="evidence" value="ECO:0000250"/>
    <property type="project" value="UniProtKB"/>
</dbReference>
<dbReference type="GO" id="GO:0004963">
    <property type="term" value="F:follicle-stimulating hormone receptor activity"/>
    <property type="evidence" value="ECO:0000314"/>
    <property type="project" value="RGD"/>
</dbReference>
<dbReference type="GO" id="GO:0008528">
    <property type="term" value="F:G protein-coupled peptide receptor activity"/>
    <property type="evidence" value="ECO:0000318"/>
    <property type="project" value="GO_Central"/>
</dbReference>
<dbReference type="GO" id="GO:0004930">
    <property type="term" value="F:G protein-coupled receptor activity"/>
    <property type="evidence" value="ECO:0000304"/>
    <property type="project" value="RGD"/>
</dbReference>
<dbReference type="GO" id="GO:0017046">
    <property type="term" value="F:peptide hormone binding"/>
    <property type="evidence" value="ECO:0000314"/>
    <property type="project" value="RGD"/>
</dbReference>
<dbReference type="GO" id="GO:0007189">
    <property type="term" value="P:adenylate cyclase-activating G protein-coupled receptor signaling pathway"/>
    <property type="evidence" value="ECO:0000314"/>
    <property type="project" value="RGD"/>
</dbReference>
<dbReference type="GO" id="GO:0007193">
    <property type="term" value="P:adenylate cyclase-inhibiting G protein-coupled receptor signaling pathway"/>
    <property type="evidence" value="ECO:0000266"/>
    <property type="project" value="RGD"/>
</dbReference>
<dbReference type="GO" id="GO:0007188">
    <property type="term" value="P:adenylate cyclase-modulating G protein-coupled receptor signaling pathway"/>
    <property type="evidence" value="ECO:0000266"/>
    <property type="project" value="RGD"/>
</dbReference>
<dbReference type="GO" id="GO:0071711">
    <property type="term" value="P:basement membrane organization"/>
    <property type="evidence" value="ECO:0000266"/>
    <property type="project" value="RGD"/>
</dbReference>
<dbReference type="GO" id="GO:0071372">
    <property type="term" value="P:cellular response to follicle-stimulating hormone stimulus"/>
    <property type="evidence" value="ECO:0000250"/>
    <property type="project" value="UniProtKB"/>
</dbReference>
<dbReference type="GO" id="GO:0042699">
    <property type="term" value="P:follicle-stimulating hormone signaling pathway"/>
    <property type="evidence" value="ECO:0000314"/>
    <property type="project" value="RGD"/>
</dbReference>
<dbReference type="GO" id="GO:0007186">
    <property type="term" value="P:G protein-coupled receptor signaling pathway"/>
    <property type="evidence" value="ECO:0000266"/>
    <property type="project" value="RGD"/>
</dbReference>
<dbReference type="GO" id="GO:0009755">
    <property type="term" value="P:hormone-mediated signaling pathway"/>
    <property type="evidence" value="ECO:0000318"/>
    <property type="project" value="GO_Central"/>
</dbReference>
<dbReference type="GO" id="GO:0009992">
    <property type="term" value="P:intracellular water homeostasis"/>
    <property type="evidence" value="ECO:0000266"/>
    <property type="project" value="RGD"/>
</dbReference>
<dbReference type="GO" id="GO:0007626">
    <property type="term" value="P:locomotory behavior"/>
    <property type="evidence" value="ECO:0000266"/>
    <property type="project" value="RGD"/>
</dbReference>
<dbReference type="GO" id="GO:0008584">
    <property type="term" value="P:male gonad development"/>
    <property type="evidence" value="ECO:0000266"/>
    <property type="project" value="RGD"/>
</dbReference>
<dbReference type="GO" id="GO:0045779">
    <property type="term" value="P:negative regulation of bone resorption"/>
    <property type="evidence" value="ECO:0000266"/>
    <property type="project" value="RGD"/>
</dbReference>
<dbReference type="GO" id="GO:0031175">
    <property type="term" value="P:neuron projection development"/>
    <property type="evidence" value="ECO:0000266"/>
    <property type="project" value="RGD"/>
</dbReference>
<dbReference type="GO" id="GO:0001541">
    <property type="term" value="P:ovarian follicle development"/>
    <property type="evidence" value="ECO:0000266"/>
    <property type="project" value="RGD"/>
</dbReference>
<dbReference type="GO" id="GO:0022602">
    <property type="term" value="P:ovulation cycle process"/>
    <property type="evidence" value="ECO:0000266"/>
    <property type="project" value="RGD"/>
</dbReference>
<dbReference type="GO" id="GO:0007200">
    <property type="term" value="P:phospholipase C-activating G protein-coupled receptor signaling pathway"/>
    <property type="evidence" value="ECO:0000266"/>
    <property type="project" value="RGD"/>
</dbReference>
<dbReference type="GO" id="GO:0070374">
    <property type="term" value="P:positive regulation of ERK1 and ERK2 cascade"/>
    <property type="evidence" value="ECO:0000250"/>
    <property type="project" value="UniProtKB"/>
</dbReference>
<dbReference type="GO" id="GO:0033148">
    <property type="term" value="P:positive regulation of intracellular estrogen receptor signaling pathway"/>
    <property type="evidence" value="ECO:0000266"/>
    <property type="project" value="RGD"/>
</dbReference>
<dbReference type="GO" id="GO:0051897">
    <property type="term" value="P:positive regulation of phosphatidylinositol 3-kinase/protein kinase B signal transduction"/>
    <property type="evidence" value="ECO:0000250"/>
    <property type="project" value="UniProtKB"/>
</dbReference>
<dbReference type="GO" id="GO:0001545">
    <property type="term" value="P:primary ovarian follicle growth"/>
    <property type="evidence" value="ECO:0000266"/>
    <property type="project" value="RGD"/>
</dbReference>
<dbReference type="GO" id="GO:0060408">
    <property type="term" value="P:regulation of acetylcholine metabolic process"/>
    <property type="evidence" value="ECO:0000266"/>
    <property type="project" value="RGD"/>
</dbReference>
<dbReference type="GO" id="GO:0033044">
    <property type="term" value="P:regulation of chromosome organization"/>
    <property type="evidence" value="ECO:0000266"/>
    <property type="project" value="RGD"/>
</dbReference>
<dbReference type="GO" id="GO:0032350">
    <property type="term" value="P:regulation of hormone metabolic process"/>
    <property type="evidence" value="ECO:0000266"/>
    <property type="project" value="RGD"/>
</dbReference>
<dbReference type="GO" id="GO:0033146">
    <property type="term" value="P:regulation of intracellular estrogen receptor signaling pathway"/>
    <property type="evidence" value="ECO:0000266"/>
    <property type="project" value="RGD"/>
</dbReference>
<dbReference type="GO" id="GO:0043408">
    <property type="term" value="P:regulation of MAPK cascade"/>
    <property type="evidence" value="ECO:0000266"/>
    <property type="project" value="RGD"/>
</dbReference>
<dbReference type="GO" id="GO:0045670">
    <property type="term" value="P:regulation of osteoclast differentiation"/>
    <property type="evidence" value="ECO:0000266"/>
    <property type="project" value="RGD"/>
</dbReference>
<dbReference type="GO" id="GO:0010640">
    <property type="term" value="P:regulation of platelet-derived growth factor receptor signaling pathway"/>
    <property type="evidence" value="ECO:0000266"/>
    <property type="project" value="RGD"/>
</dbReference>
<dbReference type="GO" id="GO:0010738">
    <property type="term" value="P:regulation of protein kinase A signaling"/>
    <property type="evidence" value="ECO:0000250"/>
    <property type="project" value="UniProtKB"/>
</dbReference>
<dbReference type="GO" id="GO:0003073">
    <property type="term" value="P:regulation of systemic arterial blood pressure"/>
    <property type="evidence" value="ECO:0000266"/>
    <property type="project" value="RGD"/>
</dbReference>
<dbReference type="GO" id="GO:0060009">
    <property type="term" value="P:Sertoli cell development"/>
    <property type="evidence" value="ECO:0000266"/>
    <property type="project" value="RGD"/>
</dbReference>
<dbReference type="GO" id="GO:0060011">
    <property type="term" value="P:Sertoli cell proliferation"/>
    <property type="evidence" value="ECO:0000266"/>
    <property type="project" value="RGD"/>
</dbReference>
<dbReference type="GO" id="GO:0035092">
    <property type="term" value="P:sperm DNA condensation"/>
    <property type="evidence" value="ECO:0000266"/>
    <property type="project" value="RGD"/>
</dbReference>
<dbReference type="GO" id="GO:0007286">
    <property type="term" value="P:spermatid development"/>
    <property type="evidence" value="ECO:0000266"/>
    <property type="project" value="RGD"/>
</dbReference>
<dbReference type="GO" id="GO:0007283">
    <property type="term" value="P:spermatogenesis"/>
    <property type="evidence" value="ECO:0000266"/>
    <property type="project" value="RGD"/>
</dbReference>
<dbReference type="GO" id="GO:0045056">
    <property type="term" value="P:transcytosis"/>
    <property type="evidence" value="ECO:0000314"/>
    <property type="project" value="RGD"/>
</dbReference>
<dbReference type="GO" id="GO:0060065">
    <property type="term" value="P:uterus development"/>
    <property type="evidence" value="ECO:0000266"/>
    <property type="project" value="RGD"/>
</dbReference>
<dbReference type="CDD" id="cd15360">
    <property type="entry name" value="7tmA_FSH-R"/>
    <property type="match status" value="1"/>
</dbReference>
<dbReference type="FunFam" id="1.20.1070.10:FF:000019">
    <property type="entry name" value="Lutropin-choriogonadotropic hormone receptor"/>
    <property type="match status" value="1"/>
</dbReference>
<dbReference type="Gene3D" id="1.20.1070.10">
    <property type="entry name" value="Rhodopsin 7-helix transmembrane proteins"/>
    <property type="match status" value="1"/>
</dbReference>
<dbReference type="Gene3D" id="3.80.10.10">
    <property type="entry name" value="Ribonuclease Inhibitor"/>
    <property type="match status" value="1"/>
</dbReference>
<dbReference type="InterPro" id="IPR002272">
    <property type="entry name" value="FSH_rcpt"/>
</dbReference>
<dbReference type="InterPro" id="IPR024635">
    <property type="entry name" value="GnHR_TM"/>
</dbReference>
<dbReference type="InterPro" id="IPR000276">
    <property type="entry name" value="GPCR_Rhodpsn"/>
</dbReference>
<dbReference type="InterPro" id="IPR017452">
    <property type="entry name" value="GPCR_Rhodpsn_7TM"/>
</dbReference>
<dbReference type="InterPro" id="IPR002131">
    <property type="entry name" value="Gphrmn_rcpt_fam"/>
</dbReference>
<dbReference type="InterPro" id="IPR001611">
    <property type="entry name" value="Leu-rich_rpt"/>
</dbReference>
<dbReference type="InterPro" id="IPR026906">
    <property type="entry name" value="LRR_5"/>
</dbReference>
<dbReference type="InterPro" id="IPR032675">
    <property type="entry name" value="LRR_dom_sf"/>
</dbReference>
<dbReference type="InterPro" id="IPR000372">
    <property type="entry name" value="LRRNT"/>
</dbReference>
<dbReference type="PANTHER" id="PTHR24372:SF5">
    <property type="entry name" value="FOLLICLE-STIMULATING HORMONE RECEPTOR"/>
    <property type="match status" value="1"/>
</dbReference>
<dbReference type="PANTHER" id="PTHR24372">
    <property type="entry name" value="GLYCOPROTEIN HORMONE RECEPTOR"/>
    <property type="match status" value="1"/>
</dbReference>
<dbReference type="Pfam" id="PF00001">
    <property type="entry name" value="7tm_1"/>
    <property type="match status" value="1"/>
</dbReference>
<dbReference type="Pfam" id="PF12369">
    <property type="entry name" value="GnHR_trans"/>
    <property type="match status" value="1"/>
</dbReference>
<dbReference type="Pfam" id="PF13306">
    <property type="entry name" value="LRR_5"/>
    <property type="match status" value="2"/>
</dbReference>
<dbReference type="PRINTS" id="PR01143">
    <property type="entry name" value="FSHRECEPTOR"/>
</dbReference>
<dbReference type="PRINTS" id="PR00373">
    <property type="entry name" value="GLYCHORMONER"/>
</dbReference>
<dbReference type="PRINTS" id="PR00237">
    <property type="entry name" value="GPCRRHODOPSN"/>
</dbReference>
<dbReference type="SMART" id="SM00013">
    <property type="entry name" value="LRRNT"/>
    <property type="match status" value="1"/>
</dbReference>
<dbReference type="SUPFAM" id="SSF81321">
    <property type="entry name" value="Family A G protein-coupled receptor-like"/>
    <property type="match status" value="1"/>
</dbReference>
<dbReference type="SUPFAM" id="SSF52058">
    <property type="entry name" value="L domain-like"/>
    <property type="match status" value="1"/>
</dbReference>
<dbReference type="PROSITE" id="PS00237">
    <property type="entry name" value="G_PROTEIN_RECEP_F1_1"/>
    <property type="match status" value="1"/>
</dbReference>
<dbReference type="PROSITE" id="PS50262">
    <property type="entry name" value="G_PROTEIN_RECEP_F1_2"/>
    <property type="match status" value="1"/>
</dbReference>
<dbReference type="PROSITE" id="PS51450">
    <property type="entry name" value="LRR"/>
    <property type="match status" value="3"/>
</dbReference>
<proteinExistence type="evidence at protein level"/>
<feature type="signal peptide" evidence="2">
    <location>
        <begin position="1"/>
        <end position="17"/>
    </location>
</feature>
<feature type="chain" id="PRO_0000012775" description="Follicle-stimulating hormone receptor">
    <location>
        <begin position="18"/>
        <end position="692"/>
    </location>
</feature>
<feature type="topological domain" description="Extracellular" evidence="2">
    <location>
        <begin position="18"/>
        <end position="365"/>
    </location>
</feature>
<feature type="transmembrane region" description="Helical; Name=1" evidence="2">
    <location>
        <begin position="366"/>
        <end position="386"/>
    </location>
</feature>
<feature type="topological domain" description="Cytoplasmic" evidence="2">
    <location>
        <begin position="387"/>
        <end position="397"/>
    </location>
</feature>
<feature type="transmembrane region" description="Helical; Name=2" evidence="2">
    <location>
        <begin position="398"/>
        <end position="420"/>
    </location>
</feature>
<feature type="topological domain" description="Extracellular" evidence="2">
    <location>
        <begin position="421"/>
        <end position="442"/>
    </location>
</feature>
<feature type="transmembrane region" description="Helical; Name=3" evidence="2">
    <location>
        <begin position="443"/>
        <end position="464"/>
    </location>
</feature>
<feature type="topological domain" description="Cytoplasmic" evidence="2">
    <location>
        <begin position="465"/>
        <end position="484"/>
    </location>
</feature>
<feature type="transmembrane region" description="Helical; Name=4" evidence="2">
    <location>
        <begin position="485"/>
        <end position="507"/>
    </location>
</feature>
<feature type="topological domain" description="Extracellular" evidence="2">
    <location>
        <begin position="508"/>
        <end position="527"/>
    </location>
</feature>
<feature type="transmembrane region" description="Helical; Name=5" evidence="2">
    <location>
        <begin position="528"/>
        <end position="549"/>
    </location>
</feature>
<feature type="topological domain" description="Cytoplasmic" evidence="2">
    <location>
        <begin position="550"/>
        <end position="572"/>
    </location>
</feature>
<feature type="transmembrane region" description="Helical; Name=6" evidence="2">
    <location>
        <begin position="573"/>
        <end position="596"/>
    </location>
</feature>
<feature type="topological domain" description="Extracellular" evidence="2">
    <location>
        <begin position="597"/>
        <end position="607"/>
    </location>
</feature>
<feature type="transmembrane region" description="Helical; Name=7" evidence="2">
    <location>
        <begin position="608"/>
        <end position="629"/>
    </location>
</feature>
<feature type="topological domain" description="Cytoplasmic" evidence="2">
    <location>
        <begin position="630"/>
        <end position="692"/>
    </location>
</feature>
<feature type="domain" description="LRRNT">
    <location>
        <begin position="18"/>
        <end position="46"/>
    </location>
</feature>
<feature type="repeat" description="LRR 1">
    <location>
        <begin position="49"/>
        <end position="72"/>
    </location>
</feature>
<feature type="repeat" description="LRR 2">
    <location>
        <begin position="73"/>
        <end position="97"/>
    </location>
</feature>
<feature type="repeat" description="LRR 3">
    <location>
        <begin position="98"/>
        <end position="118"/>
    </location>
</feature>
<feature type="repeat" description="LRR 4">
    <location>
        <begin position="119"/>
        <end position="143"/>
    </location>
</feature>
<feature type="repeat" description="LRR 5">
    <location>
        <begin position="144"/>
        <end position="169"/>
    </location>
</feature>
<feature type="repeat" description="LRR 6">
    <location>
        <begin position="170"/>
        <end position="192"/>
    </location>
</feature>
<feature type="repeat" description="LRR 7">
    <location>
        <begin position="193"/>
        <end position="216"/>
    </location>
</feature>
<feature type="repeat" description="LRR 8">
    <location>
        <begin position="217"/>
        <end position="240"/>
    </location>
</feature>
<feature type="repeat" description="LRR 9">
    <location>
        <begin position="241"/>
        <end position="259"/>
    </location>
</feature>
<feature type="modified residue" description="Sulfotyrosine" evidence="1">
    <location>
        <position position="334"/>
    </location>
</feature>
<feature type="glycosylation site" description="N-linked (GlcNAc...) asparagine" evidence="5">
    <location>
        <position position="191"/>
    </location>
</feature>
<feature type="glycosylation site" description="N-linked (GlcNAc...) asparagine" evidence="2">
    <location>
        <position position="199"/>
    </location>
</feature>
<feature type="glycosylation site" description="N-linked (GlcNAc...) asparagine" evidence="5">
    <location>
        <position position="293"/>
    </location>
</feature>
<feature type="disulfide bond" evidence="3">
    <location>
        <begin position="18"/>
        <end position="25"/>
    </location>
</feature>
<feature type="disulfide bond" evidence="3">
    <location>
        <begin position="23"/>
        <end position="32"/>
    </location>
</feature>
<feature type="disulfide bond" evidence="1">
    <location>
        <begin position="275"/>
        <end position="345"/>
    </location>
</feature>
<feature type="disulfide bond" evidence="1">
    <location>
        <begin position="276"/>
        <end position="355"/>
    </location>
</feature>
<feature type="disulfide bond" evidence="1">
    <location>
        <begin position="276"/>
        <end position="292"/>
    </location>
</feature>
<feature type="disulfide bond" evidence="1">
    <location>
        <begin position="292"/>
        <end position="337"/>
    </location>
</feature>
<feature type="disulfide bond" evidence="3">
    <location>
        <begin position="441"/>
        <end position="516"/>
    </location>
</feature>
<feature type="mutagenesis site" description="Reduces N-glycosylation level." evidence="5">
    <original>N</original>
    <variation>Q</variation>
    <location>
        <position position="191"/>
    </location>
</feature>
<feature type="mutagenesis site" description="Does not affect N-glycosylation level." evidence="5">
    <original>N</original>
    <variation>Q</variation>
    <location>
        <position position="199"/>
    </location>
</feature>
<feature type="mutagenesis site" description="Reduces N-glycosylation level." evidence="5">
    <original>N</original>
    <variation>Q</variation>
    <location>
        <position position="293"/>
    </location>
</feature>
<feature type="mutagenesis site" description="Reduces interaction with ARRB2; when associated with I-389 and N-394." evidence="4">
    <original>T</original>
    <variation>I</variation>
    <location>
        <position position="387"/>
    </location>
</feature>
<feature type="mutagenesis site" description="Reduces interaction with ARRB2; when associated with I-387 and N-394." evidence="4">
    <original>S</original>
    <variation>I</variation>
    <location>
        <position position="389"/>
    </location>
</feature>
<feature type="mutagenesis site" description="Reduces interaction with ARRB2; when associated with I-387 and I-389." evidence="4">
    <original>T</original>
    <variation>N</variation>
    <location>
        <position position="394"/>
    </location>
</feature>
<feature type="mutagenesis site" description="Reduces interaction with ARRB2." evidence="4">
    <original>D</original>
    <variation>N</variation>
    <location>
        <position position="407"/>
    </location>
</feature>
<feature type="mutagenesis site" description="Reduces interaction with ARRB2." evidence="4">
    <original>Y</original>
    <variation>F</variation>
    <location>
        <position position="548"/>
    </location>
</feature>
<feature type="sequence conflict" description="In Ref. 2; AAB21415." evidence="6" ref="2">
    <location>
        <begin position="172"/>
        <end position="175"/>
    </location>
</feature>
<feature type="sequence conflict" description="In Ref. 2; AAB21415." evidence="6" ref="2">
    <original>L</original>
    <variation>W</variation>
    <location>
        <position position="252"/>
    </location>
</feature>
<gene>
    <name type="primary">Fshr</name>
</gene>
<organism>
    <name type="scientific">Rattus norvegicus</name>
    <name type="common">Rat</name>
    <dbReference type="NCBI Taxonomy" id="10116"/>
    <lineage>
        <taxon>Eukaryota</taxon>
        <taxon>Metazoa</taxon>
        <taxon>Chordata</taxon>
        <taxon>Craniata</taxon>
        <taxon>Vertebrata</taxon>
        <taxon>Euteleostomi</taxon>
        <taxon>Mammalia</taxon>
        <taxon>Eutheria</taxon>
        <taxon>Euarchontoglires</taxon>
        <taxon>Glires</taxon>
        <taxon>Rodentia</taxon>
        <taxon>Myomorpha</taxon>
        <taxon>Muroidea</taxon>
        <taxon>Muridae</taxon>
        <taxon>Murinae</taxon>
        <taxon>Rattus</taxon>
    </lineage>
</organism>
<name>FSHR_RAT</name>
<comment type="function">
    <text evidence="1">G protein-coupled receptor for follitropin, the follicle-stimulating hormone. Through cAMP production activates the downstream PI3K-AKT and ERK1/ERK2 signaling pathways.</text>
</comment>
<comment type="subunit">
    <text evidence="1 4">Homotrimer. Functions as a homotrimer binding the FSH hormone heterodimer composed of CGA and FSHB (By similarity). Interacts with ARRB2 (PubMed:12850288). Interacts with APPL2; interaction is independent of follicle stimulating hormone stimulation (By similarity).</text>
</comment>
<comment type="subcellular location">
    <subcellularLocation>
        <location evidence="1">Cell membrane</location>
        <topology evidence="1">Multi-pass membrane protein</topology>
    </subcellularLocation>
</comment>
<comment type="tissue specificity">
    <text>Sertoli cells and ovarian granulosa cells.</text>
</comment>
<comment type="PTM">
    <text evidence="5">N-glycosylated; indirectly required for FSH-binding, possibly via a conformational change that allows high affinity binding of hormone.</text>
</comment>
<comment type="PTM">
    <text evidence="1">Sulfated.</text>
</comment>
<comment type="similarity">
    <text evidence="3">Belongs to the G-protein coupled receptor 1 family. FSH/LSH/TSH subfamily.</text>
</comment>
<keyword id="KW-1003">Cell membrane</keyword>
<keyword id="KW-1015">Disulfide bond</keyword>
<keyword id="KW-0297">G-protein coupled receptor</keyword>
<keyword id="KW-0325">Glycoprotein</keyword>
<keyword id="KW-0433">Leucine-rich repeat</keyword>
<keyword id="KW-0472">Membrane</keyword>
<keyword id="KW-0675">Receptor</keyword>
<keyword id="KW-1185">Reference proteome</keyword>
<keyword id="KW-0677">Repeat</keyword>
<keyword id="KW-0732">Signal</keyword>
<keyword id="KW-0765">Sulfation</keyword>
<keyword id="KW-0807">Transducer</keyword>
<keyword id="KW-0812">Transmembrane</keyword>
<keyword id="KW-1133">Transmembrane helix</keyword>
<accession>P20395</accession>
<accession>Q64183</accession>
<reference key="1">
    <citation type="journal article" date="1990" name="Mol. Endocrinol.">
        <title>The testicular receptor for follicle stimulating hormone: structure and functional expression of cloned cDNA.</title>
        <authorList>
            <person name="Sprengel R."/>
            <person name="Braun T."/>
            <person name="Nikolics K."/>
            <person name="Segaloff D.L."/>
            <person name="Seeburg P.H."/>
        </authorList>
    </citation>
    <scope>NUCLEOTIDE SEQUENCE [MRNA]</scope>
    <source>
        <tissue>Sertoli cell</tissue>
    </source>
</reference>
<reference key="2">
    <citation type="journal article" date="1992" name="Mol. Endocrinol.">
        <title>Structural organization of the follicle-stimulating hormone receptor gene.</title>
        <authorList>
            <person name="Heckert L.L."/>
            <person name="Daley I.J."/>
            <person name="Griswold M.D."/>
        </authorList>
    </citation>
    <scope>NUCLEOTIDE SEQUENCE [GENOMIC DNA]</scope>
</reference>
<reference key="3">
    <citation type="journal article" date="1995" name="Mol. Endocrinol.">
        <title>Identification of the sites of N-linked glycosylation on the follicle-stimulating hormone (FSH) receptor and assessment of their role in FSH receptor function.</title>
        <authorList>
            <person name="Davis D."/>
            <person name="Liu X."/>
            <person name="Segaloff D.L."/>
        </authorList>
    </citation>
    <scope>GLYCOSYLATION AT ASN-191 AND ASN-293</scope>
    <scope>MUTAGENESIS OF ASN-191; ASN-199 AND ASN-293</scope>
</reference>
<reference key="4">
    <citation type="journal article" date="2003" name="Mol. Cell. Endocrinol.">
        <title>The association of arrestin-3 with the follitropin receptor depends on receptor activation and phosphorylation.</title>
        <authorList>
            <person name="Krishnamurthy H."/>
            <person name="Galet C."/>
            <person name="Ascoli M."/>
        </authorList>
    </citation>
    <scope>INTERACTION WITH ARRB2</scope>
    <scope>MUTAGENESIS OF THR-387; SER-389; THR-394; ASP-407 AND TYR-548</scope>
</reference>
<protein>
    <recommendedName>
        <fullName>Follicle-stimulating hormone receptor</fullName>
        <shortName>FSH-R</shortName>
    </recommendedName>
    <alternativeName>
        <fullName>Follitropin receptor</fullName>
    </alternativeName>
</protein>
<sequence length="692" mass="77681">MALLLVSLLAFLGTGSGCHHWLCHCSNRVFLCQDSKVTEIPTDLPRNAIELRFVLTKLRVIPKGSFAGFGDLEKIEISQNDVLEVIEADVFSNLPKLHEIRIEKANNLLYINPEAFQNLPSLRYLLISNTGIKHLPAVHKIQSLQKVLLDIQDNINIHIVARNSFMGLSFESVILWLSKNGIEEIHNCAFNGTQLDELNLSDNNNLEELPNDVFQGASGPVILDISRTKVHSLPNHGLENLKKLRARSTYRLKKLPNLDKFVTLMEASLTYPSHCCAFANLKRQISELHPICNKSILRQDIDDMTQIGDQRVSLIDDEPSYGKGSDMMYNEFDYDLCNEVVDVTCSPKPDAFNPCEDIMGYNILRVLIWFISILAITGNTTVLVVLTTSQYKLTVPRFLMCNLAFADLCIGIYLLLIASVDIHTKSQYHNYAIDWQTGAGCDAAGFFTVFASELSVYTLTAITLERWHTITHAMQLECKVQLRHAASVMVLGWTFAFAAALFPIFGISSYMKVSICLPMDIDSPLSQLYVMALLVLNVLAFVVICGCYTHIYLTVRNPTIVSSSSDTKIAKRMATLIFTDFLCMAPISFFAISASLKVPLITVSKAKILLVLFYPINSCANPFLYAIFTKNFRRDFFILLSKFGCYEMQAQIYRTETSSATHNFHARKSHCSSAPRVTNSYVLVPLNHSSQN</sequence>